<protein>
    <recommendedName>
        <fullName evidence="1">Large ribosomal subunit protein uL6</fullName>
    </recommendedName>
    <alternativeName>
        <fullName evidence="2">50S ribosomal protein L6</fullName>
    </alternativeName>
</protein>
<gene>
    <name evidence="1" type="primary">rplF</name>
    <name type="ordered locus">BH0149</name>
</gene>
<dbReference type="EMBL" id="AB017508">
    <property type="protein sequence ID" value="BAA75286.1"/>
    <property type="molecule type" value="Genomic_DNA"/>
</dbReference>
<dbReference type="EMBL" id="BA000004">
    <property type="protein sequence ID" value="BAB03868.1"/>
    <property type="molecule type" value="Genomic_DNA"/>
</dbReference>
<dbReference type="PIR" id="T44398">
    <property type="entry name" value="T44398"/>
</dbReference>
<dbReference type="RefSeq" id="WP_010896332.1">
    <property type="nucleotide sequence ID" value="NC_002570.2"/>
</dbReference>
<dbReference type="SMR" id="Q9Z9J9"/>
<dbReference type="STRING" id="272558.gene:10725989"/>
<dbReference type="GeneID" id="87595690"/>
<dbReference type="KEGG" id="bha:BH0149"/>
<dbReference type="eggNOG" id="COG0097">
    <property type="taxonomic scope" value="Bacteria"/>
</dbReference>
<dbReference type="HOGENOM" id="CLU_065464_1_2_9"/>
<dbReference type="OrthoDB" id="9805007at2"/>
<dbReference type="Proteomes" id="UP000001258">
    <property type="component" value="Chromosome"/>
</dbReference>
<dbReference type="GO" id="GO:0022625">
    <property type="term" value="C:cytosolic large ribosomal subunit"/>
    <property type="evidence" value="ECO:0007669"/>
    <property type="project" value="TreeGrafter"/>
</dbReference>
<dbReference type="GO" id="GO:0019843">
    <property type="term" value="F:rRNA binding"/>
    <property type="evidence" value="ECO:0007669"/>
    <property type="project" value="UniProtKB-UniRule"/>
</dbReference>
<dbReference type="GO" id="GO:0003735">
    <property type="term" value="F:structural constituent of ribosome"/>
    <property type="evidence" value="ECO:0007669"/>
    <property type="project" value="InterPro"/>
</dbReference>
<dbReference type="GO" id="GO:0002181">
    <property type="term" value="P:cytoplasmic translation"/>
    <property type="evidence" value="ECO:0007669"/>
    <property type="project" value="TreeGrafter"/>
</dbReference>
<dbReference type="FunFam" id="3.90.930.12:FF:000001">
    <property type="entry name" value="50S ribosomal protein L6"/>
    <property type="match status" value="1"/>
</dbReference>
<dbReference type="FunFam" id="3.90.930.12:FF:000002">
    <property type="entry name" value="50S ribosomal protein L6"/>
    <property type="match status" value="1"/>
</dbReference>
<dbReference type="Gene3D" id="3.90.930.12">
    <property type="entry name" value="Ribosomal protein L6, alpha-beta domain"/>
    <property type="match status" value="2"/>
</dbReference>
<dbReference type="HAMAP" id="MF_01365_B">
    <property type="entry name" value="Ribosomal_uL6_B"/>
    <property type="match status" value="1"/>
</dbReference>
<dbReference type="InterPro" id="IPR000702">
    <property type="entry name" value="Ribosomal_uL6-like"/>
</dbReference>
<dbReference type="InterPro" id="IPR036789">
    <property type="entry name" value="Ribosomal_uL6-like_a/b-dom_sf"/>
</dbReference>
<dbReference type="InterPro" id="IPR020040">
    <property type="entry name" value="Ribosomal_uL6_a/b-dom"/>
</dbReference>
<dbReference type="InterPro" id="IPR019906">
    <property type="entry name" value="Ribosomal_uL6_bac-type"/>
</dbReference>
<dbReference type="InterPro" id="IPR002358">
    <property type="entry name" value="Ribosomal_uL6_CS"/>
</dbReference>
<dbReference type="NCBIfam" id="TIGR03654">
    <property type="entry name" value="L6_bact"/>
    <property type="match status" value="1"/>
</dbReference>
<dbReference type="PANTHER" id="PTHR11655">
    <property type="entry name" value="60S/50S RIBOSOMAL PROTEIN L6/L9"/>
    <property type="match status" value="1"/>
</dbReference>
<dbReference type="PANTHER" id="PTHR11655:SF14">
    <property type="entry name" value="LARGE RIBOSOMAL SUBUNIT PROTEIN UL6M"/>
    <property type="match status" value="1"/>
</dbReference>
<dbReference type="Pfam" id="PF00347">
    <property type="entry name" value="Ribosomal_L6"/>
    <property type="match status" value="2"/>
</dbReference>
<dbReference type="PIRSF" id="PIRSF002162">
    <property type="entry name" value="Ribosomal_L6"/>
    <property type="match status" value="1"/>
</dbReference>
<dbReference type="PRINTS" id="PR00059">
    <property type="entry name" value="RIBOSOMALL6"/>
</dbReference>
<dbReference type="SUPFAM" id="SSF56053">
    <property type="entry name" value="Ribosomal protein L6"/>
    <property type="match status" value="2"/>
</dbReference>
<dbReference type="PROSITE" id="PS00525">
    <property type="entry name" value="RIBOSOMAL_L6_1"/>
    <property type="match status" value="1"/>
</dbReference>
<name>RL6_HALH5</name>
<sequence length="178" mass="19430">MSRIGNKPVEIPSGVTVTVNGADVTVKGPKGELKRTFNPEIVVKVEDNTVVVERPSDKKEHRALHGTTRSLISNMVEGVSKGFEKSLELVGVGYRAQKSGQKLVLNVGYSHPVEIVPEKGIEIEVPSNTKVTVKGIDKERVGAVASNIRSVRLPEPYKGKGIRYEGEYVRRKEGKTGK</sequence>
<keyword id="KW-1185">Reference proteome</keyword>
<keyword id="KW-0687">Ribonucleoprotein</keyword>
<keyword id="KW-0689">Ribosomal protein</keyword>
<keyword id="KW-0694">RNA-binding</keyword>
<keyword id="KW-0699">rRNA-binding</keyword>
<organism>
    <name type="scientific">Halalkalibacterium halodurans (strain ATCC BAA-125 / DSM 18197 / FERM 7344 / JCM 9153 / C-125)</name>
    <name type="common">Bacillus halodurans</name>
    <dbReference type="NCBI Taxonomy" id="272558"/>
    <lineage>
        <taxon>Bacteria</taxon>
        <taxon>Bacillati</taxon>
        <taxon>Bacillota</taxon>
        <taxon>Bacilli</taxon>
        <taxon>Bacillales</taxon>
        <taxon>Bacillaceae</taxon>
        <taxon>Halalkalibacterium (ex Joshi et al. 2022)</taxon>
    </lineage>
</organism>
<evidence type="ECO:0000255" key="1">
    <source>
        <dbReference type="HAMAP-Rule" id="MF_01365"/>
    </source>
</evidence>
<evidence type="ECO:0000305" key="2"/>
<proteinExistence type="inferred from homology"/>
<comment type="function">
    <text evidence="1">This protein binds to the 23S rRNA, and is important in its secondary structure. It is located near the subunit interface in the base of the L7/L12 stalk, and near the tRNA binding site of the peptidyltransferase center.</text>
</comment>
<comment type="subunit">
    <text evidence="1">Part of the 50S ribosomal subunit.</text>
</comment>
<comment type="similarity">
    <text evidence="1">Belongs to the universal ribosomal protein uL6 family.</text>
</comment>
<accession>Q9Z9J9</accession>
<accession>Q9JPX2</accession>
<feature type="chain" id="PRO_0000131036" description="Large ribosomal subunit protein uL6">
    <location>
        <begin position="1"/>
        <end position="178"/>
    </location>
</feature>
<reference key="1">
    <citation type="journal article" date="1999" name="Biosci. Biotechnol. Biochem.">
        <title>Sequence analysis of a 32-kb region including the major ribosomal protein gene clusters from alkaliphilic Bacillus sp. strain C-125.</title>
        <authorList>
            <person name="Takami H."/>
            <person name="Takaki Y."/>
            <person name="Nakasone K."/>
            <person name="Hirama C."/>
            <person name="Inoue A."/>
            <person name="Horikoshi K."/>
        </authorList>
    </citation>
    <scope>NUCLEOTIDE SEQUENCE [GENOMIC DNA]</scope>
    <source>
        <strain>ATCC BAA-125 / DSM 18197 / FERM 7344 / JCM 9153 / C-125</strain>
    </source>
</reference>
<reference key="2">
    <citation type="journal article" date="2000" name="Nucleic Acids Res.">
        <title>Complete genome sequence of the alkaliphilic bacterium Bacillus halodurans and genomic sequence comparison with Bacillus subtilis.</title>
        <authorList>
            <person name="Takami H."/>
            <person name="Nakasone K."/>
            <person name="Takaki Y."/>
            <person name="Maeno G."/>
            <person name="Sasaki R."/>
            <person name="Masui N."/>
            <person name="Fuji F."/>
            <person name="Hirama C."/>
            <person name="Nakamura Y."/>
            <person name="Ogasawara N."/>
            <person name="Kuhara S."/>
            <person name="Horikoshi K."/>
        </authorList>
    </citation>
    <scope>NUCLEOTIDE SEQUENCE [LARGE SCALE GENOMIC DNA]</scope>
    <source>
        <strain>ATCC BAA-125 / DSM 18197 / FERM 7344 / JCM 9153 / C-125</strain>
    </source>
</reference>